<protein>
    <recommendedName>
        <fullName>Penaeidin-2a</fullName>
        <shortName>P2</shortName>
        <shortName>Pen-2</shortName>
        <shortName>Pen-2a</shortName>
    </recommendedName>
</protein>
<reference key="1">
    <citation type="journal article" date="1997" name="J. Biol. Chem.">
        <title>Penaeidins, a new family of antimicrobial peptides isolated from the shrimp Penaeus vannamei (Decapoda).</title>
        <authorList>
            <person name="Destoumieux D."/>
            <person name="Bulet P."/>
            <person name="Loew D."/>
            <person name="van Dorsselaer A."/>
            <person name="Rodriguez J."/>
            <person name="Bachere E."/>
        </authorList>
    </citation>
    <scope>NUCLEOTIDE SEQUENCE [MRNA]</scope>
    <scope>PROTEIN SEQUENCE OF 22-71</scope>
    <scope>FUNCTION</scope>
    <scope>MASS SPECTROMETRY</scope>
    <scope>AMIDATION AT LYS-71</scope>
    <source>
        <tissue>Hemocyte</tissue>
    </source>
</reference>
<reference key="2">
    <citation type="journal article" date="1999" name="Eur. J. Biochem.">
        <title>Recombinant expression and range of activity of penaeidins, antimicrobial peptides from penaeid shrimp.</title>
        <authorList>
            <person name="Destoumieux D."/>
            <person name="Bulet P."/>
            <person name="Strub J.-M."/>
            <person name="van Dorsselaer A."/>
            <person name="Bachere E."/>
        </authorList>
    </citation>
    <scope>NUCLEOTIDE SEQUENCE [MRNA] OF 22-72</scope>
    <scope>PROTEIN SEQUENCE OF 22-71</scope>
    <scope>FUNCTION</scope>
</reference>
<reference key="3">
    <citation type="journal article" date="2000" name="J. Cell Sci.">
        <title>Penaeidins, antimicrobial peptides with chitin-binding activity, are produced and stored in shrimp granulocytes and released after microbial challenge.</title>
        <authorList>
            <person name="Destoumieux D."/>
            <person name="Munoz M."/>
            <person name="Cosseau C."/>
            <person name="Rodriguez J."/>
            <person name="Bulet P."/>
            <person name="Comps M."/>
            <person name="Bachere E."/>
        </authorList>
    </citation>
    <scope>CHITIN-BINDING PROPERTIES</scope>
    <scope>TISSUE SPECIFICITY</scope>
    <scope>SUBCELLULAR LOCATION</scope>
    <scope>DEVELOPMENTAL STAGE</scope>
    <source>
        <tissue>Hemocyte</tissue>
    </source>
</reference>
<reference key="4">
    <citation type="journal article" date="2000" name="Cell. Mol. Life Sci.">
        <title>Penaeidins, a family of antimicrobial peptides from penaeid shrimp (Crustacea, Decapoda).</title>
        <authorList>
            <person name="Destoumieux D."/>
            <person name="Munoz M."/>
            <person name="Bulet P."/>
            <person name="Bachere E."/>
        </authorList>
    </citation>
    <scope>REVIEW</scope>
</reference>
<organism>
    <name type="scientific">Penaeus vannamei</name>
    <name type="common">Whiteleg shrimp</name>
    <name type="synonym">Litopenaeus vannamei</name>
    <dbReference type="NCBI Taxonomy" id="6689"/>
    <lineage>
        <taxon>Eukaryota</taxon>
        <taxon>Metazoa</taxon>
        <taxon>Ecdysozoa</taxon>
        <taxon>Arthropoda</taxon>
        <taxon>Crustacea</taxon>
        <taxon>Multicrustacea</taxon>
        <taxon>Malacostraca</taxon>
        <taxon>Eumalacostraca</taxon>
        <taxon>Eucarida</taxon>
        <taxon>Decapoda</taxon>
        <taxon>Dendrobranchiata</taxon>
        <taxon>Penaeoidea</taxon>
        <taxon>Penaeidae</taxon>
        <taxon>Penaeus</taxon>
    </lineage>
</organism>
<sequence>MRLVVCLVFLASFALVCQGEAYRGGYTGPIPRPPPIGRPPFRPVCNACYRLSVSDARNCCIKFGSCCHLVKG</sequence>
<dbReference type="EMBL" id="Y14925">
    <property type="protein sequence ID" value="CAA75142.1"/>
    <property type="molecule type" value="mRNA"/>
</dbReference>
<dbReference type="SMR" id="P81057"/>
<dbReference type="GO" id="GO:0005737">
    <property type="term" value="C:cytoplasm"/>
    <property type="evidence" value="ECO:0007669"/>
    <property type="project" value="InterPro"/>
</dbReference>
<dbReference type="GO" id="GO:0008061">
    <property type="term" value="F:chitin binding"/>
    <property type="evidence" value="ECO:0007669"/>
    <property type="project" value="UniProtKB-KW"/>
</dbReference>
<dbReference type="GO" id="GO:0042742">
    <property type="term" value="P:defense response to bacterium"/>
    <property type="evidence" value="ECO:0007669"/>
    <property type="project" value="UniProtKB-KW"/>
</dbReference>
<dbReference type="GO" id="GO:0050832">
    <property type="term" value="P:defense response to fungus"/>
    <property type="evidence" value="ECO:0007669"/>
    <property type="project" value="UniProtKB-KW"/>
</dbReference>
<dbReference type="GO" id="GO:0031640">
    <property type="term" value="P:killing of cells of another organism"/>
    <property type="evidence" value="ECO:0007669"/>
    <property type="project" value="UniProtKB-KW"/>
</dbReference>
<dbReference type="InterPro" id="IPR009226">
    <property type="entry name" value="Penaeidin"/>
</dbReference>
<dbReference type="Pfam" id="PF05927">
    <property type="entry name" value="Penaeidin"/>
    <property type="match status" value="1"/>
</dbReference>
<proteinExistence type="evidence at protein level"/>
<keyword id="KW-0027">Amidation</keyword>
<keyword id="KW-0044">Antibiotic</keyword>
<keyword id="KW-0929">Antimicrobial</keyword>
<keyword id="KW-0147">Chitin-binding</keyword>
<keyword id="KW-0903">Direct protein sequencing</keyword>
<keyword id="KW-1015">Disulfide bond</keyword>
<keyword id="KW-0295">Fungicide</keyword>
<keyword id="KW-0732">Signal</keyword>
<evidence type="ECO:0000250" key="1"/>
<evidence type="ECO:0000255" key="2"/>
<evidence type="ECO:0000269" key="3">
    <source>
    </source>
</evidence>
<evidence type="ECO:0000269" key="4">
    <source>
    </source>
</evidence>
<evidence type="ECO:0000269" key="5">
    <source>
    </source>
</evidence>
<evidence type="ECO:0000305" key="6"/>
<feature type="signal peptide" evidence="2">
    <location>
        <begin position="1"/>
        <end position="21"/>
    </location>
</feature>
<feature type="chain" id="PRO_0000023503" description="Penaeidin-2a">
    <location>
        <begin position="22"/>
        <end position="71"/>
    </location>
</feature>
<feature type="modified residue" description="Lysine amide" evidence="5">
    <location>
        <position position="71"/>
    </location>
</feature>
<feature type="disulfide bond" evidence="1">
    <location>
        <begin position="45"/>
        <end position="59"/>
    </location>
</feature>
<feature type="disulfide bond" evidence="1">
    <location>
        <begin position="48"/>
        <end position="66"/>
    </location>
</feature>
<feature type="disulfide bond" evidence="1">
    <location>
        <begin position="60"/>
        <end position="67"/>
    </location>
</feature>
<accession>P81057</accession>
<name>PEN2A_PENVA</name>
<comment type="function">
    <text evidence="3 5">Antibacterial activity against M.luteus and E.coli bacteria. Antifungal activity against N.crassa and F.oxysporum. Presents chitin-binding activity.</text>
</comment>
<comment type="subcellular location">
    <subcellularLocation>
        <location evidence="4">Cytoplasmic granule</location>
    </subcellularLocation>
    <text>Cytoplasmic granules of hemocytes and to a lesser extent in small granules of hemocytes.</text>
</comment>
<comment type="tissue specificity">
    <text evidence="4">Higher expression in hemocytes and to a lesser extent in heart, testis, gills, intestine, lymphoid organ and hepatopancreas. Traces in eyes and subcuticular epithelium. Not present in the brain.</text>
</comment>
<comment type="developmental stage">
    <text evidence="4">Expression decreases 3 hours after microbial challenge to return to control levels after 12 hours and slightly increases after 24 hours.</text>
</comment>
<comment type="mass spectrometry"/>
<comment type="similarity">
    <text evidence="6">Belongs to the penaeidin family.</text>
</comment>